<accession>C3MJ21</accession>
<proteinExistence type="inferred from homology"/>
<reference key="1">
    <citation type="journal article" date="2009" name="Proc. Natl. Acad. Sci. U.S.A.">
        <title>Biogeography of the Sulfolobus islandicus pan-genome.</title>
        <authorList>
            <person name="Reno M.L."/>
            <person name="Held N.L."/>
            <person name="Fields C.J."/>
            <person name="Burke P.V."/>
            <person name="Whitaker R.J."/>
        </authorList>
    </citation>
    <scope>NUCLEOTIDE SEQUENCE [LARGE SCALE GENOMIC DNA]</scope>
    <source>
        <strain>L.S.2.15 / Lassen #1</strain>
    </source>
</reference>
<dbReference type="EC" id="2.5.1.61" evidence="1"/>
<dbReference type="EMBL" id="CP001399">
    <property type="protein sequence ID" value="ACP36108.1"/>
    <property type="molecule type" value="Genomic_DNA"/>
</dbReference>
<dbReference type="RefSeq" id="WP_012714101.1">
    <property type="nucleotide sequence ID" value="NC_012589.1"/>
</dbReference>
<dbReference type="SMR" id="C3MJ21"/>
<dbReference type="GeneID" id="84053516"/>
<dbReference type="KEGG" id="sis:LS215_2115"/>
<dbReference type="HOGENOM" id="CLU_019704_1_0_2"/>
<dbReference type="OrthoDB" id="8042at2157"/>
<dbReference type="UniPathway" id="UPA00251">
    <property type="reaction ID" value="UER00319"/>
</dbReference>
<dbReference type="Proteomes" id="UP000001747">
    <property type="component" value="Chromosome"/>
</dbReference>
<dbReference type="GO" id="GO:0005737">
    <property type="term" value="C:cytoplasm"/>
    <property type="evidence" value="ECO:0007669"/>
    <property type="project" value="TreeGrafter"/>
</dbReference>
<dbReference type="GO" id="GO:0004418">
    <property type="term" value="F:hydroxymethylbilane synthase activity"/>
    <property type="evidence" value="ECO:0007669"/>
    <property type="project" value="UniProtKB-UniRule"/>
</dbReference>
<dbReference type="GO" id="GO:0006782">
    <property type="term" value="P:protoporphyrinogen IX biosynthetic process"/>
    <property type="evidence" value="ECO:0007669"/>
    <property type="project" value="UniProtKB-UniRule"/>
</dbReference>
<dbReference type="CDD" id="cd13644">
    <property type="entry name" value="PBP2_HemC_archaea"/>
    <property type="match status" value="1"/>
</dbReference>
<dbReference type="Gene3D" id="3.40.190.10">
    <property type="entry name" value="Periplasmic binding protein-like II"/>
    <property type="match status" value="2"/>
</dbReference>
<dbReference type="Gene3D" id="3.30.160.40">
    <property type="entry name" value="Porphobilinogen deaminase, C-terminal domain"/>
    <property type="match status" value="1"/>
</dbReference>
<dbReference type="HAMAP" id="MF_00260">
    <property type="entry name" value="Porphobil_deam"/>
    <property type="match status" value="1"/>
</dbReference>
<dbReference type="InterPro" id="IPR000860">
    <property type="entry name" value="HemC"/>
</dbReference>
<dbReference type="InterPro" id="IPR022419">
    <property type="entry name" value="Porphobilin_deaminase_cofac_BS"/>
</dbReference>
<dbReference type="InterPro" id="IPR022417">
    <property type="entry name" value="Porphobilin_deaminase_N"/>
</dbReference>
<dbReference type="InterPro" id="IPR022418">
    <property type="entry name" value="Porphobilinogen_deaminase_C"/>
</dbReference>
<dbReference type="InterPro" id="IPR036803">
    <property type="entry name" value="Porphobilinogen_deaminase_C_sf"/>
</dbReference>
<dbReference type="NCBIfam" id="TIGR00212">
    <property type="entry name" value="hemC"/>
    <property type="match status" value="1"/>
</dbReference>
<dbReference type="PANTHER" id="PTHR11557">
    <property type="entry name" value="PORPHOBILINOGEN DEAMINASE"/>
    <property type="match status" value="1"/>
</dbReference>
<dbReference type="PANTHER" id="PTHR11557:SF0">
    <property type="entry name" value="PORPHOBILINOGEN DEAMINASE"/>
    <property type="match status" value="1"/>
</dbReference>
<dbReference type="Pfam" id="PF01379">
    <property type="entry name" value="Porphobil_deam"/>
    <property type="match status" value="1"/>
</dbReference>
<dbReference type="Pfam" id="PF03900">
    <property type="entry name" value="Porphobil_deamC"/>
    <property type="match status" value="1"/>
</dbReference>
<dbReference type="PIRSF" id="PIRSF001438">
    <property type="entry name" value="4pyrrol_synth_OHMeBilane_synth"/>
    <property type="match status" value="1"/>
</dbReference>
<dbReference type="PRINTS" id="PR00151">
    <property type="entry name" value="PORPHBDMNASE"/>
</dbReference>
<dbReference type="SUPFAM" id="SSF53850">
    <property type="entry name" value="Periplasmic binding protein-like II"/>
    <property type="match status" value="1"/>
</dbReference>
<dbReference type="SUPFAM" id="SSF54782">
    <property type="entry name" value="Porphobilinogen deaminase (hydroxymethylbilane synthase), C-terminal domain"/>
    <property type="match status" value="1"/>
</dbReference>
<dbReference type="PROSITE" id="PS00533">
    <property type="entry name" value="PORPHOBILINOGEN_DEAM"/>
    <property type="match status" value="1"/>
</dbReference>
<comment type="function">
    <text evidence="1">Tetrapolymerization of the monopyrrole PBG into the hydroxymethylbilane pre-uroporphyrinogen in several discrete steps.</text>
</comment>
<comment type="catalytic activity">
    <reaction evidence="1">
        <text>4 porphobilinogen + H2O = hydroxymethylbilane + 4 NH4(+)</text>
        <dbReference type="Rhea" id="RHEA:13185"/>
        <dbReference type="ChEBI" id="CHEBI:15377"/>
        <dbReference type="ChEBI" id="CHEBI:28938"/>
        <dbReference type="ChEBI" id="CHEBI:57845"/>
        <dbReference type="ChEBI" id="CHEBI:58126"/>
        <dbReference type="EC" id="2.5.1.61"/>
    </reaction>
</comment>
<comment type="cofactor">
    <cofactor evidence="1">
        <name>dipyrromethane</name>
        <dbReference type="ChEBI" id="CHEBI:60342"/>
    </cofactor>
    <text evidence="1">Binds 1 dipyrromethane group covalently.</text>
</comment>
<comment type="pathway">
    <text evidence="1">Porphyrin-containing compound metabolism; protoporphyrin-IX biosynthesis; coproporphyrinogen-III from 5-aminolevulinate: step 2/4.</text>
</comment>
<comment type="miscellaneous">
    <text evidence="1">The porphobilinogen subunits are added to the dipyrromethane group.</text>
</comment>
<comment type="similarity">
    <text evidence="1">Belongs to the HMBS family.</text>
</comment>
<protein>
    <recommendedName>
        <fullName evidence="1">Probable porphobilinogen deaminase</fullName>
        <shortName evidence="1">PBG</shortName>
        <ecNumber evidence="1">2.5.1.61</ecNumber>
    </recommendedName>
    <alternativeName>
        <fullName evidence="1">Hydroxymethylbilane synthase</fullName>
        <shortName evidence="1">HMBS</shortName>
    </alternativeName>
    <alternativeName>
        <fullName evidence="1">Pre-uroporphyrinogen synthase</fullName>
    </alternativeName>
</protein>
<name>HEM3_SACI2</name>
<organism>
    <name type="scientific">Saccharolobus islandicus (strain L.S.2.15 / Lassen #1)</name>
    <name type="common">Sulfolobus islandicus</name>
    <dbReference type="NCBI Taxonomy" id="429572"/>
    <lineage>
        <taxon>Archaea</taxon>
        <taxon>Thermoproteota</taxon>
        <taxon>Thermoprotei</taxon>
        <taxon>Sulfolobales</taxon>
        <taxon>Sulfolobaceae</taxon>
        <taxon>Saccharolobus</taxon>
    </lineage>
</organism>
<sequence>MKIRIAARGSKLSRIQVDMLGEKLKKIGIEYEIIDIKTKADLFSTEPLSKLGKGVFEKEVNEAVLEGKADIAVHSMKDILSEINPSLEIFAVLERDPPYDILIAEKNLDKLDSNITIGTSSIRRKNFLKYIKPEINTKDIRGNVDTRIRKYLSKEYQGLILAEASLKRLNMTMNYHRLNVYDFTPEANQGIIVALGRKKDEKIKEIFKEINHKDTLDEALAERAVISLVGGGCHSPIGVLFKKEGKEFYGIASYSDGKKKITVSISKPGDPYTIGSELGLLLKKEMKNEDIIP</sequence>
<gene>
    <name evidence="1" type="primary">hemC</name>
    <name type="ordered locus">LS215_2115</name>
</gene>
<feature type="chain" id="PRO_1000204664" description="Probable porphobilinogen deaminase">
    <location>
        <begin position="1"/>
        <end position="293"/>
    </location>
</feature>
<feature type="modified residue" description="S-(dipyrrolylmethanemethyl)cysteine" evidence="1">
    <location>
        <position position="233"/>
    </location>
</feature>
<evidence type="ECO:0000255" key="1">
    <source>
        <dbReference type="HAMAP-Rule" id="MF_00260"/>
    </source>
</evidence>
<keyword id="KW-0627">Porphyrin biosynthesis</keyword>
<keyword id="KW-0808">Transferase</keyword>